<name>RL29_ACISJ</name>
<comment type="similarity">
    <text evidence="1">Belongs to the universal ribosomal protein uL29 family.</text>
</comment>
<protein>
    <recommendedName>
        <fullName evidence="1">Large ribosomal subunit protein uL29</fullName>
    </recommendedName>
    <alternativeName>
        <fullName evidence="2">50S ribosomal protein L29</fullName>
    </alternativeName>
</protein>
<reference key="1">
    <citation type="submission" date="2006-12" db="EMBL/GenBank/DDBJ databases">
        <title>Complete sequence of chromosome 1 of Acidovorax sp. JS42.</title>
        <authorList>
            <person name="Copeland A."/>
            <person name="Lucas S."/>
            <person name="Lapidus A."/>
            <person name="Barry K."/>
            <person name="Detter J.C."/>
            <person name="Glavina del Rio T."/>
            <person name="Dalin E."/>
            <person name="Tice H."/>
            <person name="Pitluck S."/>
            <person name="Chertkov O."/>
            <person name="Brettin T."/>
            <person name="Bruce D."/>
            <person name="Han C."/>
            <person name="Tapia R."/>
            <person name="Gilna P."/>
            <person name="Schmutz J."/>
            <person name="Larimer F."/>
            <person name="Land M."/>
            <person name="Hauser L."/>
            <person name="Kyrpides N."/>
            <person name="Kim E."/>
            <person name="Stahl D."/>
            <person name="Richardson P."/>
        </authorList>
    </citation>
    <scope>NUCLEOTIDE SEQUENCE [LARGE SCALE GENOMIC DNA]</scope>
    <source>
        <strain>JS42</strain>
    </source>
</reference>
<dbReference type="EMBL" id="CP000539">
    <property type="protein sequence ID" value="ABM40540.1"/>
    <property type="molecule type" value="Genomic_DNA"/>
</dbReference>
<dbReference type="SMR" id="A1W2R5"/>
<dbReference type="STRING" id="232721.Ajs_0286"/>
<dbReference type="KEGG" id="ajs:Ajs_0286"/>
<dbReference type="eggNOG" id="COG0255">
    <property type="taxonomic scope" value="Bacteria"/>
</dbReference>
<dbReference type="HOGENOM" id="CLU_158491_1_1_4"/>
<dbReference type="Proteomes" id="UP000000645">
    <property type="component" value="Chromosome"/>
</dbReference>
<dbReference type="GO" id="GO:1990904">
    <property type="term" value="C:ribonucleoprotein complex"/>
    <property type="evidence" value="ECO:0007669"/>
    <property type="project" value="UniProtKB-KW"/>
</dbReference>
<dbReference type="GO" id="GO:0005840">
    <property type="term" value="C:ribosome"/>
    <property type="evidence" value="ECO:0007669"/>
    <property type="project" value="UniProtKB-KW"/>
</dbReference>
<dbReference type="GO" id="GO:0003735">
    <property type="term" value="F:structural constituent of ribosome"/>
    <property type="evidence" value="ECO:0007669"/>
    <property type="project" value="InterPro"/>
</dbReference>
<dbReference type="GO" id="GO:0006412">
    <property type="term" value="P:translation"/>
    <property type="evidence" value="ECO:0007669"/>
    <property type="project" value="UniProtKB-UniRule"/>
</dbReference>
<dbReference type="CDD" id="cd00427">
    <property type="entry name" value="Ribosomal_L29_HIP"/>
    <property type="match status" value="1"/>
</dbReference>
<dbReference type="FunFam" id="1.10.287.310:FF:000001">
    <property type="entry name" value="50S ribosomal protein L29"/>
    <property type="match status" value="1"/>
</dbReference>
<dbReference type="Gene3D" id="1.10.287.310">
    <property type="match status" value="1"/>
</dbReference>
<dbReference type="HAMAP" id="MF_00374">
    <property type="entry name" value="Ribosomal_uL29"/>
    <property type="match status" value="1"/>
</dbReference>
<dbReference type="InterPro" id="IPR001854">
    <property type="entry name" value="Ribosomal_uL29"/>
</dbReference>
<dbReference type="InterPro" id="IPR018254">
    <property type="entry name" value="Ribosomal_uL29_CS"/>
</dbReference>
<dbReference type="InterPro" id="IPR036049">
    <property type="entry name" value="Ribosomal_uL29_sf"/>
</dbReference>
<dbReference type="NCBIfam" id="TIGR00012">
    <property type="entry name" value="L29"/>
    <property type="match status" value="1"/>
</dbReference>
<dbReference type="Pfam" id="PF00831">
    <property type="entry name" value="Ribosomal_L29"/>
    <property type="match status" value="1"/>
</dbReference>
<dbReference type="SUPFAM" id="SSF46561">
    <property type="entry name" value="Ribosomal protein L29 (L29p)"/>
    <property type="match status" value="1"/>
</dbReference>
<dbReference type="PROSITE" id="PS00579">
    <property type="entry name" value="RIBOSOMAL_L29"/>
    <property type="match status" value="1"/>
</dbReference>
<proteinExistence type="inferred from homology"/>
<accession>A1W2R5</accession>
<keyword id="KW-0687">Ribonucleoprotein</keyword>
<keyword id="KW-0689">Ribosomal protein</keyword>
<evidence type="ECO:0000255" key="1">
    <source>
        <dbReference type="HAMAP-Rule" id="MF_00374"/>
    </source>
</evidence>
<evidence type="ECO:0000305" key="2"/>
<gene>
    <name evidence="1" type="primary">rpmC</name>
    <name type="ordered locus">Ajs_0286</name>
</gene>
<sequence length="65" mass="7164">MTKSAELRQKDVAGLEAEIKSLQKAHFGLRMQKATQQLGNTATLKATRRDIARAKTILAEKQAAK</sequence>
<feature type="chain" id="PRO_1000007410" description="Large ribosomal subunit protein uL29">
    <location>
        <begin position="1"/>
        <end position="65"/>
    </location>
</feature>
<organism>
    <name type="scientific">Acidovorax sp. (strain JS42)</name>
    <dbReference type="NCBI Taxonomy" id="232721"/>
    <lineage>
        <taxon>Bacteria</taxon>
        <taxon>Pseudomonadati</taxon>
        <taxon>Pseudomonadota</taxon>
        <taxon>Betaproteobacteria</taxon>
        <taxon>Burkholderiales</taxon>
        <taxon>Comamonadaceae</taxon>
        <taxon>Acidovorax</taxon>
    </lineage>
</organism>